<evidence type="ECO:0000255" key="1">
    <source>
        <dbReference type="HAMAP-Rule" id="MF_01006"/>
    </source>
</evidence>
<name>UPPP_DESOH</name>
<accession>A8ZXM2</accession>
<feature type="chain" id="PRO_1000197361" description="Undecaprenyl-diphosphatase">
    <location>
        <begin position="1"/>
        <end position="273"/>
    </location>
</feature>
<feature type="transmembrane region" description="Helical" evidence="1">
    <location>
        <begin position="1"/>
        <end position="21"/>
    </location>
</feature>
<feature type="transmembrane region" description="Helical" evidence="1">
    <location>
        <begin position="39"/>
        <end position="59"/>
    </location>
</feature>
<feature type="transmembrane region" description="Helical" evidence="1">
    <location>
        <begin position="63"/>
        <end position="83"/>
    </location>
</feature>
<feature type="transmembrane region" description="Helical" evidence="1">
    <location>
        <begin position="92"/>
        <end position="112"/>
    </location>
</feature>
<feature type="transmembrane region" description="Helical" evidence="1">
    <location>
        <begin position="118"/>
        <end position="138"/>
    </location>
</feature>
<feature type="transmembrane region" description="Helical" evidence="1">
    <location>
        <begin position="165"/>
        <end position="185"/>
    </location>
</feature>
<feature type="transmembrane region" description="Helical" evidence="1">
    <location>
        <begin position="195"/>
        <end position="215"/>
    </location>
</feature>
<feature type="transmembrane region" description="Helical" evidence="1">
    <location>
        <begin position="225"/>
        <end position="245"/>
    </location>
</feature>
<feature type="transmembrane region" description="Helical" evidence="1">
    <location>
        <begin position="252"/>
        <end position="272"/>
    </location>
</feature>
<keyword id="KW-0046">Antibiotic resistance</keyword>
<keyword id="KW-0997">Cell inner membrane</keyword>
<keyword id="KW-1003">Cell membrane</keyword>
<keyword id="KW-0133">Cell shape</keyword>
<keyword id="KW-0961">Cell wall biogenesis/degradation</keyword>
<keyword id="KW-0378">Hydrolase</keyword>
<keyword id="KW-0472">Membrane</keyword>
<keyword id="KW-0573">Peptidoglycan synthesis</keyword>
<keyword id="KW-1185">Reference proteome</keyword>
<keyword id="KW-0812">Transmembrane</keyword>
<keyword id="KW-1133">Transmembrane helix</keyword>
<sequence length="273" mass="28764">MEPIQGVVLGIIQGLTEFLPVSSSGHLVLVQHLFGITEPALFFDVSLHMGTLLAVLIVFRKDLGMMAVSVGRGIVAMFGGIAPRSDRDAEGLKLALLIVVGSVPTAILGLGLKQVDHLFFSLPLVGAMLLVTGTLLWLTRDRDTGGVGVSGFSKGRAFWIGMVQGLAVLPGISRSGATIAAGLFLGLDRATAARFSFLLCIPAIVGAELLSAVDLFSGHARLDLATVLGSLTAFVVGYGALKVLIRIVQQGRFYLFAPYCFILGGVTLWIGMR</sequence>
<reference key="1">
    <citation type="submission" date="2007-10" db="EMBL/GenBank/DDBJ databases">
        <title>Complete sequence of Desulfococcus oleovorans Hxd3.</title>
        <authorList>
            <consortium name="US DOE Joint Genome Institute"/>
            <person name="Copeland A."/>
            <person name="Lucas S."/>
            <person name="Lapidus A."/>
            <person name="Barry K."/>
            <person name="Glavina del Rio T."/>
            <person name="Dalin E."/>
            <person name="Tice H."/>
            <person name="Pitluck S."/>
            <person name="Kiss H."/>
            <person name="Brettin T."/>
            <person name="Bruce D."/>
            <person name="Detter J.C."/>
            <person name="Han C."/>
            <person name="Schmutz J."/>
            <person name="Larimer F."/>
            <person name="Land M."/>
            <person name="Hauser L."/>
            <person name="Kyrpides N."/>
            <person name="Kim E."/>
            <person name="Wawrik B."/>
            <person name="Richardson P."/>
        </authorList>
    </citation>
    <scope>NUCLEOTIDE SEQUENCE [LARGE SCALE GENOMIC DNA]</scope>
    <source>
        <strain>DSM 6200 / JCM 39069 / Hxd3</strain>
    </source>
</reference>
<comment type="function">
    <text evidence="1">Catalyzes the dephosphorylation of undecaprenyl diphosphate (UPP). Confers resistance to bacitracin.</text>
</comment>
<comment type="catalytic activity">
    <reaction evidence="1">
        <text>di-trans,octa-cis-undecaprenyl diphosphate + H2O = di-trans,octa-cis-undecaprenyl phosphate + phosphate + H(+)</text>
        <dbReference type="Rhea" id="RHEA:28094"/>
        <dbReference type="ChEBI" id="CHEBI:15377"/>
        <dbReference type="ChEBI" id="CHEBI:15378"/>
        <dbReference type="ChEBI" id="CHEBI:43474"/>
        <dbReference type="ChEBI" id="CHEBI:58405"/>
        <dbReference type="ChEBI" id="CHEBI:60392"/>
        <dbReference type="EC" id="3.6.1.27"/>
    </reaction>
</comment>
<comment type="subcellular location">
    <subcellularLocation>
        <location evidence="1">Cell inner membrane</location>
        <topology evidence="1">Multi-pass membrane protein</topology>
    </subcellularLocation>
</comment>
<comment type="miscellaneous">
    <text>Bacitracin is thought to be involved in the inhibition of peptidoglycan synthesis by sequestering undecaprenyl diphosphate, thereby reducing the pool of lipid carrier available.</text>
</comment>
<comment type="similarity">
    <text evidence="1">Belongs to the UppP family.</text>
</comment>
<dbReference type="EC" id="3.6.1.27" evidence="1"/>
<dbReference type="EMBL" id="CP000859">
    <property type="protein sequence ID" value="ABW66980.1"/>
    <property type="molecule type" value="Genomic_DNA"/>
</dbReference>
<dbReference type="RefSeq" id="WP_012174598.1">
    <property type="nucleotide sequence ID" value="NC_009943.1"/>
</dbReference>
<dbReference type="SMR" id="A8ZXM2"/>
<dbReference type="STRING" id="96561.Dole_1174"/>
<dbReference type="KEGG" id="dol:Dole_1174"/>
<dbReference type="eggNOG" id="COG1968">
    <property type="taxonomic scope" value="Bacteria"/>
</dbReference>
<dbReference type="HOGENOM" id="CLU_060296_1_2_7"/>
<dbReference type="OrthoDB" id="9808289at2"/>
<dbReference type="Proteomes" id="UP000008561">
    <property type="component" value="Chromosome"/>
</dbReference>
<dbReference type="GO" id="GO:0005886">
    <property type="term" value="C:plasma membrane"/>
    <property type="evidence" value="ECO:0007669"/>
    <property type="project" value="UniProtKB-SubCell"/>
</dbReference>
<dbReference type="GO" id="GO:0050380">
    <property type="term" value="F:undecaprenyl-diphosphatase activity"/>
    <property type="evidence" value="ECO:0007669"/>
    <property type="project" value="UniProtKB-UniRule"/>
</dbReference>
<dbReference type="GO" id="GO:0071555">
    <property type="term" value="P:cell wall organization"/>
    <property type="evidence" value="ECO:0007669"/>
    <property type="project" value="UniProtKB-KW"/>
</dbReference>
<dbReference type="GO" id="GO:0009252">
    <property type="term" value="P:peptidoglycan biosynthetic process"/>
    <property type="evidence" value="ECO:0007669"/>
    <property type="project" value="UniProtKB-KW"/>
</dbReference>
<dbReference type="GO" id="GO:0008360">
    <property type="term" value="P:regulation of cell shape"/>
    <property type="evidence" value="ECO:0007669"/>
    <property type="project" value="UniProtKB-KW"/>
</dbReference>
<dbReference type="GO" id="GO:0046677">
    <property type="term" value="P:response to antibiotic"/>
    <property type="evidence" value="ECO:0007669"/>
    <property type="project" value="UniProtKB-UniRule"/>
</dbReference>
<dbReference type="HAMAP" id="MF_01006">
    <property type="entry name" value="Undec_diphosphatase"/>
    <property type="match status" value="1"/>
</dbReference>
<dbReference type="InterPro" id="IPR003824">
    <property type="entry name" value="UppP"/>
</dbReference>
<dbReference type="PANTHER" id="PTHR30622">
    <property type="entry name" value="UNDECAPRENYL-DIPHOSPHATASE"/>
    <property type="match status" value="1"/>
</dbReference>
<dbReference type="PANTHER" id="PTHR30622:SF2">
    <property type="entry name" value="UNDECAPRENYL-DIPHOSPHATASE"/>
    <property type="match status" value="1"/>
</dbReference>
<dbReference type="Pfam" id="PF02673">
    <property type="entry name" value="BacA"/>
    <property type="match status" value="1"/>
</dbReference>
<organism>
    <name type="scientific">Desulfosudis oleivorans (strain DSM 6200 / JCM 39069 / Hxd3)</name>
    <name type="common">Desulfococcus oleovorans</name>
    <dbReference type="NCBI Taxonomy" id="96561"/>
    <lineage>
        <taxon>Bacteria</taxon>
        <taxon>Pseudomonadati</taxon>
        <taxon>Thermodesulfobacteriota</taxon>
        <taxon>Desulfobacteria</taxon>
        <taxon>Desulfobacterales</taxon>
        <taxon>Desulfosudaceae</taxon>
        <taxon>Desulfosudis</taxon>
    </lineage>
</organism>
<gene>
    <name evidence="1" type="primary">uppP</name>
    <name type="ordered locus">Dole_1174</name>
</gene>
<protein>
    <recommendedName>
        <fullName evidence="1">Undecaprenyl-diphosphatase</fullName>
        <ecNumber evidence="1">3.6.1.27</ecNumber>
    </recommendedName>
    <alternativeName>
        <fullName evidence="1">Bacitracin resistance protein</fullName>
    </alternativeName>
    <alternativeName>
        <fullName evidence="1">Undecaprenyl pyrophosphate phosphatase</fullName>
    </alternativeName>
</protein>
<proteinExistence type="inferred from homology"/>